<dbReference type="EMBL" id="CP000776">
    <property type="protein sequence ID" value="ABS52231.1"/>
    <property type="molecule type" value="Genomic_DNA"/>
</dbReference>
<dbReference type="RefSeq" id="WP_012108442.1">
    <property type="nucleotide sequence ID" value="NC_009714.1"/>
</dbReference>
<dbReference type="SMR" id="A7I0W4"/>
<dbReference type="STRING" id="360107.CHAB381_0567"/>
<dbReference type="KEGG" id="cha:CHAB381_0567"/>
<dbReference type="eggNOG" id="COG0234">
    <property type="taxonomic scope" value="Bacteria"/>
</dbReference>
<dbReference type="HOGENOM" id="CLU_132825_2_0_7"/>
<dbReference type="OrthoDB" id="9806791at2"/>
<dbReference type="Proteomes" id="UP000002407">
    <property type="component" value="Chromosome"/>
</dbReference>
<dbReference type="GO" id="GO:0005737">
    <property type="term" value="C:cytoplasm"/>
    <property type="evidence" value="ECO:0007669"/>
    <property type="project" value="UniProtKB-SubCell"/>
</dbReference>
<dbReference type="GO" id="GO:0005524">
    <property type="term" value="F:ATP binding"/>
    <property type="evidence" value="ECO:0007669"/>
    <property type="project" value="InterPro"/>
</dbReference>
<dbReference type="GO" id="GO:0046872">
    <property type="term" value="F:metal ion binding"/>
    <property type="evidence" value="ECO:0007669"/>
    <property type="project" value="TreeGrafter"/>
</dbReference>
<dbReference type="GO" id="GO:0044183">
    <property type="term" value="F:protein folding chaperone"/>
    <property type="evidence" value="ECO:0007669"/>
    <property type="project" value="InterPro"/>
</dbReference>
<dbReference type="GO" id="GO:0051087">
    <property type="term" value="F:protein-folding chaperone binding"/>
    <property type="evidence" value="ECO:0007669"/>
    <property type="project" value="TreeGrafter"/>
</dbReference>
<dbReference type="GO" id="GO:0051082">
    <property type="term" value="F:unfolded protein binding"/>
    <property type="evidence" value="ECO:0007669"/>
    <property type="project" value="TreeGrafter"/>
</dbReference>
<dbReference type="GO" id="GO:0051085">
    <property type="term" value="P:chaperone cofactor-dependent protein refolding"/>
    <property type="evidence" value="ECO:0007669"/>
    <property type="project" value="TreeGrafter"/>
</dbReference>
<dbReference type="CDD" id="cd00320">
    <property type="entry name" value="cpn10"/>
    <property type="match status" value="1"/>
</dbReference>
<dbReference type="FunFam" id="2.30.33.40:FF:000001">
    <property type="entry name" value="10 kDa chaperonin"/>
    <property type="match status" value="1"/>
</dbReference>
<dbReference type="Gene3D" id="2.30.33.40">
    <property type="entry name" value="GroES chaperonin"/>
    <property type="match status" value="1"/>
</dbReference>
<dbReference type="HAMAP" id="MF_00580">
    <property type="entry name" value="CH10"/>
    <property type="match status" value="1"/>
</dbReference>
<dbReference type="InterPro" id="IPR020818">
    <property type="entry name" value="Chaperonin_GroES"/>
</dbReference>
<dbReference type="InterPro" id="IPR037124">
    <property type="entry name" value="Chaperonin_GroES_sf"/>
</dbReference>
<dbReference type="InterPro" id="IPR011032">
    <property type="entry name" value="GroES-like_sf"/>
</dbReference>
<dbReference type="NCBIfam" id="NF001537">
    <property type="entry name" value="PRK00364.3-3"/>
    <property type="match status" value="1"/>
</dbReference>
<dbReference type="PANTHER" id="PTHR10772">
    <property type="entry name" value="10 KDA HEAT SHOCK PROTEIN"/>
    <property type="match status" value="1"/>
</dbReference>
<dbReference type="PANTHER" id="PTHR10772:SF58">
    <property type="entry name" value="CO-CHAPERONIN GROES"/>
    <property type="match status" value="1"/>
</dbReference>
<dbReference type="Pfam" id="PF00166">
    <property type="entry name" value="Cpn10"/>
    <property type="match status" value="1"/>
</dbReference>
<dbReference type="PRINTS" id="PR00297">
    <property type="entry name" value="CHAPERONIN10"/>
</dbReference>
<dbReference type="SMART" id="SM00883">
    <property type="entry name" value="Cpn10"/>
    <property type="match status" value="1"/>
</dbReference>
<dbReference type="SUPFAM" id="SSF50129">
    <property type="entry name" value="GroES-like"/>
    <property type="match status" value="1"/>
</dbReference>
<accession>A7I0W4</accession>
<feature type="chain" id="PRO_1000025229" description="Co-chaperonin GroES">
    <location>
        <begin position="1"/>
        <end position="87"/>
    </location>
</feature>
<evidence type="ECO:0000255" key="1">
    <source>
        <dbReference type="HAMAP-Rule" id="MF_00580"/>
    </source>
</evidence>
<keyword id="KW-0143">Chaperone</keyword>
<keyword id="KW-0963">Cytoplasm</keyword>
<keyword id="KW-1185">Reference proteome</keyword>
<name>CH10_CAMHC</name>
<reference key="1">
    <citation type="submission" date="2007-07" db="EMBL/GenBank/DDBJ databases">
        <title>Complete genome sequence of Campylobacter hominis ATCC BAA-381, a commensal isolated from the human gastrointestinal tract.</title>
        <authorList>
            <person name="Fouts D.E."/>
            <person name="Mongodin E.F."/>
            <person name="Puiu D."/>
            <person name="Sebastian Y."/>
            <person name="Miller W.G."/>
            <person name="Mandrell R.E."/>
            <person name="Nelson K.E."/>
        </authorList>
    </citation>
    <scope>NUCLEOTIDE SEQUENCE [LARGE SCALE GENOMIC DNA]</scope>
    <source>
        <strain>ATCC BAA-381 / DSM 21671 / CCUG 45161 / LMG 19568 / NCTC 13146 / CH001A</strain>
    </source>
</reference>
<sequence length="87" mass="9470">MKFQPLGKRVLIEREEESNKTASGIIIPDNASKEKPSTGKIVEVGTECDCVKAGDKVAFAKYSGSELTLGDKKYLILNLEDVLGIIK</sequence>
<proteinExistence type="inferred from homology"/>
<protein>
    <recommendedName>
        <fullName evidence="1">Co-chaperonin GroES</fullName>
    </recommendedName>
    <alternativeName>
        <fullName evidence="1">10 kDa chaperonin</fullName>
    </alternativeName>
    <alternativeName>
        <fullName evidence="1">Chaperonin-10</fullName>
        <shortName evidence="1">Cpn10</shortName>
    </alternativeName>
</protein>
<gene>
    <name evidence="1" type="primary">groES</name>
    <name evidence="1" type="synonym">groS</name>
    <name type="ordered locus">CHAB381_0567</name>
</gene>
<organism>
    <name type="scientific">Campylobacter hominis (strain ATCC BAA-381 / DSM 21671 / CCUG 45161 / LMG 19568 / NCTC 13146 / CH001A)</name>
    <dbReference type="NCBI Taxonomy" id="360107"/>
    <lineage>
        <taxon>Bacteria</taxon>
        <taxon>Pseudomonadati</taxon>
        <taxon>Campylobacterota</taxon>
        <taxon>Epsilonproteobacteria</taxon>
        <taxon>Campylobacterales</taxon>
        <taxon>Campylobacteraceae</taxon>
        <taxon>Campylobacter</taxon>
    </lineage>
</organism>
<comment type="function">
    <text evidence="1">Together with the chaperonin GroEL, plays an essential role in assisting protein folding. The GroEL-GroES system forms a nano-cage that allows encapsulation of the non-native substrate proteins and provides a physical environment optimized to promote and accelerate protein folding. GroES binds to the apical surface of the GroEL ring, thereby capping the opening of the GroEL channel.</text>
</comment>
<comment type="subunit">
    <text evidence="1">Heptamer of 7 subunits arranged in a ring. Interacts with the chaperonin GroEL.</text>
</comment>
<comment type="subcellular location">
    <subcellularLocation>
        <location evidence="1">Cytoplasm</location>
    </subcellularLocation>
</comment>
<comment type="similarity">
    <text evidence="1">Belongs to the GroES chaperonin family.</text>
</comment>